<keyword id="KW-0131">Cell cycle</keyword>
<keyword id="KW-0132">Cell division</keyword>
<keyword id="KW-0238">DNA-binding</keyword>
<keyword id="KW-0498">Mitosis</keyword>
<keyword id="KW-0539">Nucleus</keyword>
<keyword id="KW-1185">Reference proteome</keyword>
<comment type="function">
    <text evidence="1">Adapter protein able to interact with different proteins and involved in different biological processes.</text>
</comment>
<comment type="subcellular location">
    <subcellularLocation>
        <location evidence="1">Nucleus</location>
    </subcellularLocation>
</comment>
<comment type="similarity">
    <text evidence="4">Belongs to the MAD2 family.</text>
</comment>
<reference key="1">
    <citation type="journal article" date="2005" name="Nature">
        <title>The genome of the social amoeba Dictyostelium discoideum.</title>
        <authorList>
            <person name="Eichinger L."/>
            <person name="Pachebat J.A."/>
            <person name="Gloeckner G."/>
            <person name="Rajandream M.A."/>
            <person name="Sucgang R."/>
            <person name="Berriman M."/>
            <person name="Song J."/>
            <person name="Olsen R."/>
            <person name="Szafranski K."/>
            <person name="Xu Q."/>
            <person name="Tunggal B."/>
            <person name="Kummerfeld S."/>
            <person name="Madera M."/>
            <person name="Konfortov B.A."/>
            <person name="Rivero F."/>
            <person name="Bankier A.T."/>
            <person name="Lehmann R."/>
            <person name="Hamlin N."/>
            <person name="Davies R."/>
            <person name="Gaudet P."/>
            <person name="Fey P."/>
            <person name="Pilcher K."/>
            <person name="Chen G."/>
            <person name="Saunders D."/>
            <person name="Sodergren E.J."/>
            <person name="Davis P."/>
            <person name="Kerhornou A."/>
            <person name="Nie X."/>
            <person name="Hall N."/>
            <person name="Anjard C."/>
            <person name="Hemphill L."/>
            <person name="Bason N."/>
            <person name="Farbrother P."/>
            <person name="Desany B."/>
            <person name="Just E."/>
            <person name="Morio T."/>
            <person name="Rost R."/>
            <person name="Churcher C.M."/>
            <person name="Cooper J."/>
            <person name="Haydock S."/>
            <person name="van Driessche N."/>
            <person name="Cronin A."/>
            <person name="Goodhead I."/>
            <person name="Muzny D.M."/>
            <person name="Mourier T."/>
            <person name="Pain A."/>
            <person name="Lu M."/>
            <person name="Harper D."/>
            <person name="Lindsay R."/>
            <person name="Hauser H."/>
            <person name="James K.D."/>
            <person name="Quiles M."/>
            <person name="Madan Babu M."/>
            <person name="Saito T."/>
            <person name="Buchrieser C."/>
            <person name="Wardroper A."/>
            <person name="Felder M."/>
            <person name="Thangavelu M."/>
            <person name="Johnson D."/>
            <person name="Knights A."/>
            <person name="Loulseged H."/>
            <person name="Mungall K.L."/>
            <person name="Oliver K."/>
            <person name="Price C."/>
            <person name="Quail M.A."/>
            <person name="Urushihara H."/>
            <person name="Hernandez J."/>
            <person name="Rabbinowitsch E."/>
            <person name="Steffen D."/>
            <person name="Sanders M."/>
            <person name="Ma J."/>
            <person name="Kohara Y."/>
            <person name="Sharp S."/>
            <person name="Simmonds M.N."/>
            <person name="Spiegler S."/>
            <person name="Tivey A."/>
            <person name="Sugano S."/>
            <person name="White B."/>
            <person name="Walker D."/>
            <person name="Woodward J.R."/>
            <person name="Winckler T."/>
            <person name="Tanaka Y."/>
            <person name="Shaulsky G."/>
            <person name="Schleicher M."/>
            <person name="Weinstock G.M."/>
            <person name="Rosenthal A."/>
            <person name="Cox E.C."/>
            <person name="Chisholm R.L."/>
            <person name="Gibbs R.A."/>
            <person name="Loomis W.F."/>
            <person name="Platzer M."/>
            <person name="Kay R.R."/>
            <person name="Williams J.G."/>
            <person name="Dear P.H."/>
            <person name="Noegel A.A."/>
            <person name="Barrell B.G."/>
            <person name="Kuspa A."/>
        </authorList>
    </citation>
    <scope>NUCLEOTIDE SEQUENCE [LARGE SCALE GENOMIC DNA]</scope>
    <source>
        <strain>AX4</strain>
    </source>
</reference>
<proteinExistence type="inferred from homology"/>
<protein>
    <recommendedName>
        <fullName>Mitotic spindle assembly checkpoint protein MAD2B</fullName>
    </recommendedName>
    <alternativeName>
        <fullName>Mitotic arrest deficient 2-like protein 2</fullName>
        <shortName>MAD2-like protein 2</shortName>
    </alternativeName>
</protein>
<organism>
    <name type="scientific">Dictyostelium discoideum</name>
    <name type="common">Social amoeba</name>
    <dbReference type="NCBI Taxonomy" id="44689"/>
    <lineage>
        <taxon>Eukaryota</taxon>
        <taxon>Amoebozoa</taxon>
        <taxon>Evosea</taxon>
        <taxon>Eumycetozoa</taxon>
        <taxon>Dictyostelia</taxon>
        <taxon>Dictyosteliales</taxon>
        <taxon>Dictyosteliaceae</taxon>
        <taxon>Dictyostelium</taxon>
    </lineage>
</organism>
<dbReference type="EMBL" id="AAFI02000047">
    <property type="protein sequence ID" value="EAL66233.1"/>
    <property type="molecule type" value="Genomic_DNA"/>
</dbReference>
<dbReference type="RefSeq" id="XP_640239.1">
    <property type="nucleotide sequence ID" value="XM_635147.1"/>
</dbReference>
<dbReference type="SMR" id="Q54S00"/>
<dbReference type="FunCoup" id="Q54S00">
    <property type="interactions" value="246"/>
</dbReference>
<dbReference type="STRING" id="44689.Q54S00"/>
<dbReference type="PaxDb" id="44689-DDB0305034"/>
<dbReference type="EnsemblProtists" id="EAL66233">
    <property type="protein sequence ID" value="EAL66233"/>
    <property type="gene ID" value="DDB_G0282747"/>
</dbReference>
<dbReference type="GeneID" id="8623778"/>
<dbReference type="KEGG" id="ddi:DDB_G0282747"/>
<dbReference type="dictyBase" id="DDB_G0282747"/>
<dbReference type="VEuPathDB" id="AmoebaDB:DDB_G0282747"/>
<dbReference type="eggNOG" id="KOG3186">
    <property type="taxonomic scope" value="Eukaryota"/>
</dbReference>
<dbReference type="HOGENOM" id="CLU_837900_0_0_1"/>
<dbReference type="InParanoid" id="Q54S00"/>
<dbReference type="OMA" id="VACHCIL"/>
<dbReference type="Reactome" id="R-DDI-110312">
    <property type="pathway name" value="Translesion synthesis by REV1"/>
</dbReference>
<dbReference type="Reactome" id="R-DDI-5655862">
    <property type="pathway name" value="Translesion synthesis by POLK"/>
</dbReference>
<dbReference type="PRO" id="PR:Q54S00"/>
<dbReference type="Proteomes" id="UP000002195">
    <property type="component" value="Chromosome 3"/>
</dbReference>
<dbReference type="GO" id="GO:0005634">
    <property type="term" value="C:nucleus"/>
    <property type="evidence" value="ECO:0007669"/>
    <property type="project" value="UniProtKB-SubCell"/>
</dbReference>
<dbReference type="GO" id="GO:0016035">
    <property type="term" value="C:zeta DNA polymerase complex"/>
    <property type="evidence" value="ECO:0000318"/>
    <property type="project" value="GO_Central"/>
</dbReference>
<dbReference type="GO" id="GO:0003677">
    <property type="term" value="F:DNA binding"/>
    <property type="evidence" value="ECO:0007669"/>
    <property type="project" value="UniProtKB-KW"/>
</dbReference>
<dbReference type="GO" id="GO:0051301">
    <property type="term" value="P:cell division"/>
    <property type="evidence" value="ECO:0007669"/>
    <property type="project" value="UniProtKB-KW"/>
</dbReference>
<dbReference type="Gene3D" id="3.30.900.10">
    <property type="entry name" value="HORMA domain"/>
    <property type="match status" value="1"/>
</dbReference>
<dbReference type="InterPro" id="IPR003511">
    <property type="entry name" value="HORMA_dom"/>
</dbReference>
<dbReference type="InterPro" id="IPR036570">
    <property type="entry name" value="HORMA_dom_sf"/>
</dbReference>
<dbReference type="InterPro" id="IPR045091">
    <property type="entry name" value="Mad2-like"/>
</dbReference>
<dbReference type="PANTHER" id="PTHR11842">
    <property type="entry name" value="MITOTIC SPINDLE ASSEMBLY CHECKPOINT PROTEIN MAD2"/>
    <property type="match status" value="1"/>
</dbReference>
<dbReference type="PANTHER" id="PTHR11842:SF10">
    <property type="entry name" value="MITOTIC SPINDLE ASSEMBLY CHECKPOINT PROTEIN MAD2B"/>
    <property type="match status" value="1"/>
</dbReference>
<dbReference type="Pfam" id="PF02301">
    <property type="entry name" value="HORMA"/>
    <property type="match status" value="1"/>
</dbReference>
<dbReference type="SUPFAM" id="SSF56019">
    <property type="entry name" value="The spindle assembly checkpoint protein mad2"/>
    <property type="match status" value="1"/>
</dbReference>
<dbReference type="PROSITE" id="PS50815">
    <property type="entry name" value="HORMA"/>
    <property type="match status" value="1"/>
</dbReference>
<feature type="chain" id="PRO_0000328298" description="Mitotic spindle assembly checkpoint protein MAD2B">
    <location>
        <begin position="1"/>
        <end position="332"/>
    </location>
</feature>
<feature type="domain" description="HORMA" evidence="2">
    <location>
        <begin position="4"/>
        <end position="332"/>
    </location>
</feature>
<feature type="region of interest" description="Disordered" evidence="3">
    <location>
        <begin position="181"/>
        <end position="204"/>
    </location>
</feature>
<feature type="region of interest" description="Disordered" evidence="3">
    <location>
        <begin position="225"/>
        <end position="244"/>
    </location>
</feature>
<feature type="compositionally biased region" description="Basic and acidic residues" evidence="3">
    <location>
        <begin position="230"/>
        <end position="244"/>
    </location>
</feature>
<evidence type="ECO:0000250" key="1"/>
<evidence type="ECO:0000255" key="2">
    <source>
        <dbReference type="PROSITE-ProRule" id="PRU00109"/>
    </source>
</evidence>
<evidence type="ECO:0000256" key="3">
    <source>
        <dbReference type="SAM" id="MobiDB-lite"/>
    </source>
</evidence>
<evidence type="ECO:0000305" key="4"/>
<gene>
    <name type="primary">mad2l2</name>
    <name type="synonym">mad2b</name>
    <name type="ORF">DDB_G0282747</name>
</gene>
<accession>Q54S00</accession>
<name>MD2L2_DICDI</name>
<sequence>MLDEHFCDCIGEFLETSFHCILYIRGVYPSCLFSKSIKYDIPVPISRSDLLTRYISNSIDSLKPHFLKDTIEKISLTILNKYDKPIEKFIFEISSLNNTTNNKNKNNNNNNNNSDDDETFNYYINIQKQNYTSNNNNNNNNNINNNNNKPNLLQLEASFKAYIIKILMTTDSFYSEQNFYKTQQSSSSSSSLKTSGGGDGNGFISNSDGVIHFNEIDNETYQQIKSNQKNKKEDNDDNNNGDKDLKFTIHVHTKPTTSNIGLNTNLSNVILNINPLESPRRTNTTINQITPVWISTTEKDSEIENSYIIPLNSNITDGKTTIRTFTEQSITK</sequence>